<feature type="chain" id="PRO_1000003136" description="Ribosome-recycling factor">
    <location>
        <begin position="1"/>
        <end position="180"/>
    </location>
</feature>
<proteinExistence type="inferred from homology"/>
<name>RRF_CHLFF</name>
<protein>
    <recommendedName>
        <fullName evidence="1">Ribosome-recycling factor</fullName>
        <shortName evidence="1">RRF</shortName>
    </recommendedName>
    <alternativeName>
        <fullName evidence="1">Ribosome-releasing factor</fullName>
    </alternativeName>
</protein>
<organism>
    <name type="scientific">Chlamydia felis (strain Fe/C-56)</name>
    <name type="common">Chlamydophila felis</name>
    <dbReference type="NCBI Taxonomy" id="264202"/>
    <lineage>
        <taxon>Bacteria</taxon>
        <taxon>Pseudomonadati</taxon>
        <taxon>Chlamydiota</taxon>
        <taxon>Chlamydiia</taxon>
        <taxon>Chlamydiales</taxon>
        <taxon>Chlamydiaceae</taxon>
        <taxon>Chlamydia/Chlamydophila group</taxon>
        <taxon>Chlamydia</taxon>
    </lineage>
</organism>
<evidence type="ECO:0000255" key="1">
    <source>
        <dbReference type="HAMAP-Rule" id="MF_00040"/>
    </source>
</evidence>
<comment type="function">
    <text evidence="1">Responsible for the release of ribosomes from messenger RNA at the termination of protein biosynthesis. May increase the efficiency of translation by recycling ribosomes from one round of translation to another.</text>
</comment>
<comment type="subcellular location">
    <subcellularLocation>
        <location evidence="1">Cytoplasm</location>
    </subcellularLocation>
</comment>
<comment type="similarity">
    <text evidence="1">Belongs to the RRF family.</text>
</comment>
<sequence>MSILADTEKKMATALEFFQKEIRAFRTGKAHPALVETVTVDVYGTTMRLSDLASISVADTRQLVISPYDANNVSAISKGIIAANLNLQPDAEGAIIRIKIPEPTAEYRNEVIKQLRRKSEEAKVTIRNVRREANDKLKKDSDLTEDAVKGMEKKIQELTDKFCKQIDEMSKQKEADLSSI</sequence>
<reference key="1">
    <citation type="journal article" date="2006" name="DNA Res.">
        <title>Genome sequence of the cat pathogen, Chlamydophila felis.</title>
        <authorList>
            <person name="Azuma Y."/>
            <person name="Hirakawa H."/>
            <person name="Yamashita A."/>
            <person name="Cai Y."/>
            <person name="Rahman M.A."/>
            <person name="Suzuki H."/>
            <person name="Mitaku S."/>
            <person name="Toh H."/>
            <person name="Goto S."/>
            <person name="Murakami T."/>
            <person name="Sugi K."/>
            <person name="Hayashi H."/>
            <person name="Fukushi H."/>
            <person name="Hattori M."/>
            <person name="Kuhara S."/>
            <person name="Shirai M."/>
        </authorList>
    </citation>
    <scope>NUCLEOTIDE SEQUENCE [LARGE SCALE GENOMIC DNA]</scope>
    <source>
        <strain>Fe/C-56</strain>
    </source>
</reference>
<gene>
    <name evidence="1" type="primary">frr</name>
    <name type="ordered locus">CF0962</name>
</gene>
<keyword id="KW-0963">Cytoplasm</keyword>
<keyword id="KW-0648">Protein biosynthesis</keyword>
<accession>Q252Q4</accession>
<dbReference type="EMBL" id="AP006861">
    <property type="protein sequence ID" value="BAE81734.1"/>
    <property type="molecule type" value="Genomic_DNA"/>
</dbReference>
<dbReference type="RefSeq" id="WP_011458507.1">
    <property type="nucleotide sequence ID" value="NC_007899.1"/>
</dbReference>
<dbReference type="SMR" id="Q252Q4"/>
<dbReference type="STRING" id="264202.CF0962"/>
<dbReference type="KEGG" id="cfe:CF0962"/>
<dbReference type="eggNOG" id="COG0233">
    <property type="taxonomic scope" value="Bacteria"/>
</dbReference>
<dbReference type="HOGENOM" id="CLU_073981_2_1_0"/>
<dbReference type="OrthoDB" id="9804006at2"/>
<dbReference type="Proteomes" id="UP000001260">
    <property type="component" value="Chromosome"/>
</dbReference>
<dbReference type="GO" id="GO:0005737">
    <property type="term" value="C:cytoplasm"/>
    <property type="evidence" value="ECO:0007669"/>
    <property type="project" value="UniProtKB-SubCell"/>
</dbReference>
<dbReference type="GO" id="GO:0043023">
    <property type="term" value="F:ribosomal large subunit binding"/>
    <property type="evidence" value="ECO:0007669"/>
    <property type="project" value="TreeGrafter"/>
</dbReference>
<dbReference type="GO" id="GO:0006415">
    <property type="term" value="P:translational termination"/>
    <property type="evidence" value="ECO:0007669"/>
    <property type="project" value="UniProtKB-UniRule"/>
</dbReference>
<dbReference type="CDD" id="cd00520">
    <property type="entry name" value="RRF"/>
    <property type="match status" value="1"/>
</dbReference>
<dbReference type="FunFam" id="1.10.132.20:FF:000001">
    <property type="entry name" value="Ribosome-recycling factor"/>
    <property type="match status" value="1"/>
</dbReference>
<dbReference type="FunFam" id="3.30.1360.40:FF:000001">
    <property type="entry name" value="Ribosome-recycling factor"/>
    <property type="match status" value="1"/>
</dbReference>
<dbReference type="Gene3D" id="3.30.1360.40">
    <property type="match status" value="1"/>
</dbReference>
<dbReference type="Gene3D" id="1.10.132.20">
    <property type="entry name" value="Ribosome-recycling factor"/>
    <property type="match status" value="1"/>
</dbReference>
<dbReference type="HAMAP" id="MF_00040">
    <property type="entry name" value="RRF"/>
    <property type="match status" value="1"/>
</dbReference>
<dbReference type="InterPro" id="IPR002661">
    <property type="entry name" value="Ribosome_recyc_fac"/>
</dbReference>
<dbReference type="InterPro" id="IPR023584">
    <property type="entry name" value="Ribosome_recyc_fac_dom"/>
</dbReference>
<dbReference type="InterPro" id="IPR036191">
    <property type="entry name" value="RRF_sf"/>
</dbReference>
<dbReference type="NCBIfam" id="TIGR00496">
    <property type="entry name" value="frr"/>
    <property type="match status" value="1"/>
</dbReference>
<dbReference type="PANTHER" id="PTHR20982:SF3">
    <property type="entry name" value="MITOCHONDRIAL RIBOSOME RECYCLING FACTOR PSEUDO 1"/>
    <property type="match status" value="1"/>
</dbReference>
<dbReference type="PANTHER" id="PTHR20982">
    <property type="entry name" value="RIBOSOME RECYCLING FACTOR"/>
    <property type="match status" value="1"/>
</dbReference>
<dbReference type="Pfam" id="PF01765">
    <property type="entry name" value="RRF"/>
    <property type="match status" value="1"/>
</dbReference>
<dbReference type="SUPFAM" id="SSF55194">
    <property type="entry name" value="Ribosome recycling factor, RRF"/>
    <property type="match status" value="1"/>
</dbReference>